<keyword id="KW-0150">Chloroplast</keyword>
<keyword id="KW-0472">Membrane</keyword>
<keyword id="KW-0520">NAD</keyword>
<keyword id="KW-0521">NADP</keyword>
<keyword id="KW-0934">Plastid</keyword>
<keyword id="KW-0618">Plastoquinone</keyword>
<keyword id="KW-0874">Quinone</keyword>
<keyword id="KW-0793">Thylakoid</keyword>
<keyword id="KW-1278">Translocase</keyword>
<keyword id="KW-0813">Transport</keyword>
<comment type="function">
    <text evidence="1">NDH shuttles electrons from NAD(P)H:plastoquinone, via FMN and iron-sulfur (Fe-S) centers, to quinones in the photosynthetic chain and possibly in a chloroplast respiratory chain. The immediate electron acceptor for the enzyme in this species is believed to be plastoquinone. Couples the redox reaction to proton translocation, and thus conserves the redox energy in a proton gradient.</text>
</comment>
<comment type="catalytic activity">
    <reaction evidence="1">
        <text>a plastoquinone + NADH + (n+1) H(+)(in) = a plastoquinol + NAD(+) + n H(+)(out)</text>
        <dbReference type="Rhea" id="RHEA:42608"/>
        <dbReference type="Rhea" id="RHEA-COMP:9561"/>
        <dbReference type="Rhea" id="RHEA-COMP:9562"/>
        <dbReference type="ChEBI" id="CHEBI:15378"/>
        <dbReference type="ChEBI" id="CHEBI:17757"/>
        <dbReference type="ChEBI" id="CHEBI:57540"/>
        <dbReference type="ChEBI" id="CHEBI:57945"/>
        <dbReference type="ChEBI" id="CHEBI:62192"/>
    </reaction>
</comment>
<comment type="catalytic activity">
    <reaction evidence="1">
        <text>a plastoquinone + NADPH + (n+1) H(+)(in) = a plastoquinol + NADP(+) + n H(+)(out)</text>
        <dbReference type="Rhea" id="RHEA:42612"/>
        <dbReference type="Rhea" id="RHEA-COMP:9561"/>
        <dbReference type="Rhea" id="RHEA-COMP:9562"/>
        <dbReference type="ChEBI" id="CHEBI:15378"/>
        <dbReference type="ChEBI" id="CHEBI:17757"/>
        <dbReference type="ChEBI" id="CHEBI:57783"/>
        <dbReference type="ChEBI" id="CHEBI:58349"/>
        <dbReference type="ChEBI" id="CHEBI:62192"/>
    </reaction>
</comment>
<comment type="subunit">
    <text evidence="1">NDH is composed of at least 16 different subunits, 5 of which are encoded in the nucleus.</text>
</comment>
<comment type="subcellular location">
    <subcellularLocation>
        <location evidence="1">Plastid</location>
        <location evidence="1">Chloroplast thylakoid membrane</location>
        <topology evidence="1">Peripheral membrane protein</topology>
        <orientation evidence="1">Stromal side</orientation>
    </subcellularLocation>
</comment>
<comment type="similarity">
    <text evidence="1">Belongs to the complex I 49 kDa subunit family.</text>
</comment>
<gene>
    <name evidence="1" type="primary">ndhH</name>
</gene>
<proteinExistence type="inferred from homology"/>
<accession>Q06GL1</accession>
<protein>
    <recommendedName>
        <fullName evidence="1">NAD(P)H-quinone oxidoreductase subunit H, chloroplastic</fullName>
        <ecNumber evidence="1">7.1.1.-</ecNumber>
    </recommendedName>
    <alternativeName>
        <fullName>NAD(P)H dehydrogenase subunit H</fullName>
    </alternativeName>
    <alternativeName>
        <fullName evidence="1">NADH-plastoquinone oxidoreductase 49 kDa subunit</fullName>
    </alternativeName>
    <alternativeName>
        <fullName evidence="1">NADH-plastoquinone oxidoreductase subunit H</fullName>
    </alternativeName>
</protein>
<dbReference type="EC" id="7.1.1.-" evidence="1"/>
<dbReference type="EMBL" id="DQ887677">
    <property type="protein sequence ID" value="ABI14520.1"/>
    <property type="molecule type" value="Genomic_DNA"/>
</dbReference>
<dbReference type="RefSeq" id="YP_784522.1">
    <property type="nucleotide sequence ID" value="NC_008457.1"/>
</dbReference>
<dbReference type="SMR" id="Q06GL1"/>
<dbReference type="GeneID" id="4363699"/>
<dbReference type="GO" id="GO:0009535">
    <property type="term" value="C:chloroplast thylakoid membrane"/>
    <property type="evidence" value="ECO:0007669"/>
    <property type="project" value="UniProtKB-SubCell"/>
</dbReference>
<dbReference type="GO" id="GO:0051287">
    <property type="term" value="F:NAD binding"/>
    <property type="evidence" value="ECO:0007669"/>
    <property type="project" value="InterPro"/>
</dbReference>
<dbReference type="GO" id="GO:0016655">
    <property type="term" value="F:oxidoreductase activity, acting on NAD(P)H, quinone or similar compound as acceptor"/>
    <property type="evidence" value="ECO:0007669"/>
    <property type="project" value="UniProtKB-UniRule"/>
</dbReference>
<dbReference type="GO" id="GO:0048038">
    <property type="term" value="F:quinone binding"/>
    <property type="evidence" value="ECO:0007669"/>
    <property type="project" value="UniProtKB-KW"/>
</dbReference>
<dbReference type="GO" id="GO:0019684">
    <property type="term" value="P:photosynthesis, light reaction"/>
    <property type="evidence" value="ECO:0007669"/>
    <property type="project" value="UniProtKB-UniRule"/>
</dbReference>
<dbReference type="FunFam" id="1.10.645.10:FF:000003">
    <property type="entry name" value="NAD(P)H-quinone oxidoreductase subunit H, chloroplastic"/>
    <property type="match status" value="1"/>
</dbReference>
<dbReference type="Gene3D" id="1.10.645.10">
    <property type="entry name" value="Cytochrome-c3 Hydrogenase, chain B"/>
    <property type="match status" value="1"/>
</dbReference>
<dbReference type="HAMAP" id="MF_01358">
    <property type="entry name" value="NDH1_NuoD"/>
    <property type="match status" value="1"/>
</dbReference>
<dbReference type="InterPro" id="IPR001135">
    <property type="entry name" value="NADH_Q_OxRdtase_suD"/>
</dbReference>
<dbReference type="InterPro" id="IPR014029">
    <property type="entry name" value="NADH_UbQ_OxRdtase_49kDa_CS"/>
</dbReference>
<dbReference type="InterPro" id="IPR022885">
    <property type="entry name" value="NDH1_su_D/H"/>
</dbReference>
<dbReference type="InterPro" id="IPR029014">
    <property type="entry name" value="NiFe-Hase_large"/>
</dbReference>
<dbReference type="NCBIfam" id="NF004739">
    <property type="entry name" value="PRK06075.1"/>
    <property type="match status" value="1"/>
</dbReference>
<dbReference type="NCBIfam" id="NF005649">
    <property type="entry name" value="PRK07415.1"/>
    <property type="match status" value="1"/>
</dbReference>
<dbReference type="PANTHER" id="PTHR11993:SF10">
    <property type="entry name" value="NADH DEHYDROGENASE [UBIQUINONE] IRON-SULFUR PROTEIN 2, MITOCHONDRIAL"/>
    <property type="match status" value="1"/>
</dbReference>
<dbReference type="PANTHER" id="PTHR11993">
    <property type="entry name" value="NADH-UBIQUINONE OXIDOREDUCTASE 49 KDA SUBUNIT"/>
    <property type="match status" value="1"/>
</dbReference>
<dbReference type="Pfam" id="PF00346">
    <property type="entry name" value="Complex1_49kDa"/>
    <property type="match status" value="1"/>
</dbReference>
<dbReference type="SUPFAM" id="SSF56762">
    <property type="entry name" value="HydB/Nqo4-like"/>
    <property type="match status" value="1"/>
</dbReference>
<dbReference type="PROSITE" id="PS00535">
    <property type="entry name" value="COMPLEX1_49K"/>
    <property type="match status" value="1"/>
</dbReference>
<feature type="chain" id="PRO_0000358021" description="NAD(P)H-quinone oxidoreductase subunit H, chloroplastic">
    <location>
        <begin position="1"/>
        <end position="393"/>
    </location>
</feature>
<reference key="1">
    <citation type="journal article" date="2006" name="BMC Evol. Biol.">
        <title>Complete plastid genome sequences of Drimys, Liriodendron, and Piper: implications for the phylogenetic relationships of magnoliids.</title>
        <authorList>
            <person name="Cai Z."/>
            <person name="Penaflor C."/>
            <person name="Kuehl J.V."/>
            <person name="Leebens-Mack J."/>
            <person name="Carlson J.E."/>
            <person name="dePamphilis C.W."/>
            <person name="Boore J.L."/>
            <person name="Jansen R.K."/>
        </authorList>
    </citation>
    <scope>NUCLEOTIDE SEQUENCE [LARGE SCALE GENOMIC DNA]</scope>
</reference>
<name>NDHH_PIPCE</name>
<geneLocation type="chloroplast"/>
<organism>
    <name type="scientific">Piper cenocladum</name>
    <name type="common">Ant piper</name>
    <dbReference type="NCBI Taxonomy" id="398741"/>
    <lineage>
        <taxon>Eukaryota</taxon>
        <taxon>Viridiplantae</taxon>
        <taxon>Streptophyta</taxon>
        <taxon>Embryophyta</taxon>
        <taxon>Tracheophyta</taxon>
        <taxon>Spermatophyta</taxon>
        <taxon>Magnoliopsida</taxon>
        <taxon>Magnoliidae</taxon>
        <taxon>Piperales</taxon>
        <taxon>Piperaceae</taxon>
        <taxon>Piper</taxon>
    </lineage>
</organism>
<sequence length="393" mass="45531">MTVPATRKDLMIVNMGPHHPSMHGVLRLIVTLDGEDVIDCEPILGYLHRGMEKIAENRTIIQYLPYVTRWDYLATMFTEAITVNAPEQLGNIQVPKRASYIRVIMLELSRIASHLLWLGPFMADIGAQTPFFYIFRERELLYDLFEAATGMRMMHNYFRIGGVATDLPYGWIDKCFDFCDYFLTGVVEYQKLITQNPIFLERVEGIGIIGGEEAINWGLSGPMLRASGIQWDLRKVDRYECYDEFNWEVQWQKEGDSLSRYLVRIGEMTESIKIIQQALEGIPGGPYENLEVRRFDKTKDSEWNDFEYRFISKKPSPSFELSKQELYVRVEAPKGELGIFLIGDNSVFPWRWKIRPPGFINLQILPQLVKRMKLADIMTILGSIDIIMGEVDR</sequence>
<evidence type="ECO:0000255" key="1">
    <source>
        <dbReference type="HAMAP-Rule" id="MF_01358"/>
    </source>
</evidence>